<keyword id="KW-0001">2Fe-2S</keyword>
<keyword id="KW-0004">4Fe-4S</keyword>
<keyword id="KW-0963">Cytoplasm</keyword>
<keyword id="KW-0408">Iron</keyword>
<keyword id="KW-0411">Iron-sulfur</keyword>
<keyword id="KW-0479">Metal-binding</keyword>
<keyword id="KW-0496">Mitochondrion</keyword>
<keyword id="KW-1185">Reference proteome</keyword>
<reference key="1">
    <citation type="journal article" date="2005" name="Science">
        <title>The genome sequence of Trypanosoma cruzi, etiologic agent of Chagas disease.</title>
        <authorList>
            <person name="El-Sayed N.M.A."/>
            <person name="Myler P.J."/>
            <person name="Bartholomeu D.C."/>
            <person name="Nilsson D."/>
            <person name="Aggarwal G."/>
            <person name="Tran A.-N."/>
            <person name="Ghedin E."/>
            <person name="Worthey E.A."/>
            <person name="Delcher A.L."/>
            <person name="Blandin G."/>
            <person name="Westenberger S.J."/>
            <person name="Caler E."/>
            <person name="Cerqueira G.C."/>
            <person name="Branche C."/>
            <person name="Haas B."/>
            <person name="Anupama A."/>
            <person name="Arner E."/>
            <person name="Aslund L."/>
            <person name="Attipoe P."/>
            <person name="Bontempi E."/>
            <person name="Bringaud F."/>
            <person name="Burton P."/>
            <person name="Cadag E."/>
            <person name="Campbell D.A."/>
            <person name="Carrington M."/>
            <person name="Crabtree J."/>
            <person name="Darban H."/>
            <person name="da Silveira J.F."/>
            <person name="de Jong P."/>
            <person name="Edwards K."/>
            <person name="Englund P.T."/>
            <person name="Fazelina G."/>
            <person name="Feldblyum T."/>
            <person name="Ferella M."/>
            <person name="Frasch A.C."/>
            <person name="Gull K."/>
            <person name="Horn D."/>
            <person name="Hou L."/>
            <person name="Huang Y."/>
            <person name="Kindlund E."/>
            <person name="Klingbeil M."/>
            <person name="Kluge S."/>
            <person name="Koo H."/>
            <person name="Lacerda D."/>
            <person name="Levin M.J."/>
            <person name="Lorenzi H."/>
            <person name="Louie T."/>
            <person name="Machado C.R."/>
            <person name="McCulloch R."/>
            <person name="McKenna A."/>
            <person name="Mizuno Y."/>
            <person name="Mottram J.C."/>
            <person name="Nelson S."/>
            <person name="Ochaya S."/>
            <person name="Osoegawa K."/>
            <person name="Pai G."/>
            <person name="Parsons M."/>
            <person name="Pentony M."/>
            <person name="Pettersson U."/>
            <person name="Pop M."/>
            <person name="Ramirez J.L."/>
            <person name="Rinta J."/>
            <person name="Robertson L."/>
            <person name="Salzberg S.L."/>
            <person name="Sanchez D.O."/>
            <person name="Seyler A."/>
            <person name="Sharma R."/>
            <person name="Shetty J."/>
            <person name="Simpson A.J."/>
            <person name="Sisk E."/>
            <person name="Tammi M.T."/>
            <person name="Tarleton R."/>
            <person name="Teixeira S."/>
            <person name="Van Aken S."/>
            <person name="Vogt C."/>
            <person name="Ward P.N."/>
            <person name="Wickstead B."/>
            <person name="Wortman J."/>
            <person name="White O."/>
            <person name="Fraser C.M."/>
            <person name="Stuart K.D."/>
            <person name="Andersson B."/>
        </authorList>
    </citation>
    <scope>NUCLEOTIDE SEQUENCE [LARGE SCALE GENOMIC DNA]</scope>
    <source>
        <strain>CL Brener</strain>
    </source>
</reference>
<proteinExistence type="inferred from homology"/>
<accession>Q4DER6</accession>
<evidence type="ECO:0000250" key="1">
    <source>
        <dbReference type="UniProtKB" id="P36152"/>
    </source>
</evidence>
<evidence type="ECO:0000250" key="2">
    <source>
        <dbReference type="UniProtKB" id="Q6FI81"/>
    </source>
</evidence>
<evidence type="ECO:0000305" key="3"/>
<gene>
    <name type="ORF">Tc00.1047053505071.119</name>
</gene>
<protein>
    <recommendedName>
        <fullName>Anamorsin homolog 2</fullName>
    </recommendedName>
    <alternativeName>
        <fullName>Fe-S cluster assembly protein DRE2 homolog 2</fullName>
    </alternativeName>
</protein>
<organism>
    <name type="scientific">Trypanosoma cruzi (strain CL Brener)</name>
    <dbReference type="NCBI Taxonomy" id="353153"/>
    <lineage>
        <taxon>Eukaryota</taxon>
        <taxon>Discoba</taxon>
        <taxon>Euglenozoa</taxon>
        <taxon>Kinetoplastea</taxon>
        <taxon>Metakinetoplastina</taxon>
        <taxon>Trypanosomatida</taxon>
        <taxon>Trypanosomatidae</taxon>
        <taxon>Trypanosoma</taxon>
        <taxon>Schizotrypanum</taxon>
    </lineage>
</organism>
<feature type="chain" id="PRO_0000392369" description="Anamorsin homolog 2">
    <location>
        <begin position="1"/>
        <end position="115"/>
    </location>
</feature>
<feature type="region of interest" description="Disordered" evidence="1">
    <location>
        <begin position="30"/>
        <end position="115"/>
    </location>
</feature>
<feature type="region of interest" description="Fe-S binding site A" evidence="1">
    <location>
        <begin position="39"/>
        <end position="51"/>
    </location>
</feature>
<feature type="region of interest" description="Fe-S binding site B" evidence="1">
    <location>
        <begin position="77"/>
        <end position="91"/>
    </location>
</feature>
<feature type="short sequence motif" description="Cx2C motif 1" evidence="1">
    <location>
        <begin position="77"/>
        <end position="80"/>
    </location>
</feature>
<feature type="short sequence motif" description="Cx2C motif 2" evidence="1">
    <location>
        <begin position="88"/>
        <end position="91"/>
    </location>
</feature>
<feature type="binding site" evidence="1">
    <location>
        <position position="39"/>
    </location>
    <ligand>
        <name>[2Fe-2S] cluster</name>
        <dbReference type="ChEBI" id="CHEBI:190135"/>
    </ligand>
</feature>
<feature type="binding site" evidence="1">
    <location>
        <position position="46"/>
    </location>
    <ligand>
        <name>[2Fe-2S] cluster</name>
        <dbReference type="ChEBI" id="CHEBI:190135"/>
    </ligand>
</feature>
<feature type="binding site" evidence="1">
    <location>
        <position position="49"/>
    </location>
    <ligand>
        <name>[2Fe-2S] cluster</name>
        <dbReference type="ChEBI" id="CHEBI:190135"/>
    </ligand>
</feature>
<feature type="binding site" evidence="1">
    <location>
        <position position="51"/>
    </location>
    <ligand>
        <name>[2Fe-2S] cluster</name>
        <dbReference type="ChEBI" id="CHEBI:190135"/>
    </ligand>
</feature>
<feature type="binding site" evidence="1">
    <location>
        <position position="77"/>
    </location>
    <ligand>
        <name>[4Fe-4S] cluster</name>
        <dbReference type="ChEBI" id="CHEBI:49883"/>
    </ligand>
</feature>
<feature type="binding site" evidence="1">
    <location>
        <position position="80"/>
    </location>
    <ligand>
        <name>[4Fe-4S] cluster</name>
        <dbReference type="ChEBI" id="CHEBI:49883"/>
    </ligand>
</feature>
<feature type="binding site" evidence="1">
    <location>
        <position position="88"/>
    </location>
    <ligand>
        <name>[4Fe-4S] cluster</name>
        <dbReference type="ChEBI" id="CHEBI:49883"/>
    </ligand>
</feature>
<feature type="binding site" evidence="1">
    <location>
        <position position="91"/>
    </location>
    <ligand>
        <name>[4Fe-4S] cluster</name>
        <dbReference type="ChEBI" id="CHEBI:49883"/>
    </ligand>
</feature>
<dbReference type="EMBL" id="AAHK01000563">
    <property type="protein sequence ID" value="EAN91028.1"/>
    <property type="molecule type" value="Genomic_DNA"/>
</dbReference>
<dbReference type="RefSeq" id="XP_812879.1">
    <property type="nucleotide sequence ID" value="XM_807786.1"/>
</dbReference>
<dbReference type="STRING" id="353153.Q4DER6"/>
<dbReference type="PaxDb" id="353153-Q4DER6"/>
<dbReference type="EnsemblProtists" id="EAN91028">
    <property type="protein sequence ID" value="EAN91028"/>
    <property type="gene ID" value="Tc00.1047053505071.119"/>
</dbReference>
<dbReference type="GeneID" id="3544163"/>
<dbReference type="KEGG" id="tcr:505071.119"/>
<dbReference type="eggNOG" id="KOG4020">
    <property type="taxonomic scope" value="Eukaryota"/>
</dbReference>
<dbReference type="InParanoid" id="Q4DER6"/>
<dbReference type="OMA" id="AFRCGNC"/>
<dbReference type="Proteomes" id="UP000002296">
    <property type="component" value="Unassembled WGS sequence"/>
</dbReference>
<dbReference type="GO" id="GO:0005758">
    <property type="term" value="C:mitochondrial intermembrane space"/>
    <property type="evidence" value="ECO:0007669"/>
    <property type="project" value="UniProtKB-SubCell"/>
</dbReference>
<dbReference type="GO" id="GO:0051537">
    <property type="term" value="F:2 iron, 2 sulfur cluster binding"/>
    <property type="evidence" value="ECO:0007669"/>
    <property type="project" value="UniProtKB-KW"/>
</dbReference>
<dbReference type="GO" id="GO:0051539">
    <property type="term" value="F:4 iron, 4 sulfur cluster binding"/>
    <property type="evidence" value="ECO:0007669"/>
    <property type="project" value="UniProtKB-KW"/>
</dbReference>
<dbReference type="GO" id="GO:0046872">
    <property type="term" value="F:metal ion binding"/>
    <property type="evidence" value="ECO:0007669"/>
    <property type="project" value="UniProtKB-KW"/>
</dbReference>
<dbReference type="GO" id="GO:0016226">
    <property type="term" value="P:iron-sulfur cluster assembly"/>
    <property type="evidence" value="ECO:0007669"/>
    <property type="project" value="InterPro"/>
</dbReference>
<dbReference type="InterPro" id="IPR007785">
    <property type="entry name" value="Anamorsin"/>
</dbReference>
<dbReference type="InterPro" id="IPR046408">
    <property type="entry name" value="CIAPIN1"/>
</dbReference>
<dbReference type="PANTHER" id="PTHR13273">
    <property type="entry name" value="ANAMORSIN"/>
    <property type="match status" value="1"/>
</dbReference>
<dbReference type="PANTHER" id="PTHR13273:SF14">
    <property type="entry name" value="ANAMORSIN"/>
    <property type="match status" value="1"/>
</dbReference>
<dbReference type="Pfam" id="PF05093">
    <property type="entry name" value="CIAPIN1"/>
    <property type="match status" value="1"/>
</dbReference>
<name>DRE22_TRYCC</name>
<sequence>MSSKPTQAFSLKTRQAVDEDALLTEEDRVVKEATKGEDCTTRRRACKNCTCGRAELERKMLAEGKKVEMPQMPAGGCGNCAKGDAFRCATCPFLGQPAFDNTSDGKVKLNLTDDI</sequence>
<comment type="function">
    <text evidence="1">Component of the cytosolic iron-sulfur (Fe-S) protein assembly (CIA) machinery. Required for the maturation of extramitochondrial Fe-S proteins. Part of an electron transfer chain functioning in an early step of cytosolic Fe-S biogenesis, facilitating the de novo assembly of a [4Fe-4S] cluster on the cytosolic Fe-S scaffold complex. Electrons are transferred from NADPH via a FAD- and FMN-containing diflavin oxidoreductase. Together with the diflavin oxidoreductase, also required for the assembly of the diferric tyrosyl radical cofactor of ribonucleotide reductase (RNR), probably by providing electrons for reduction during radical cofactor maturation in the catalytic small subunit.</text>
</comment>
<comment type="cofactor">
    <cofactor evidence="1">
        <name>[2Fe-2S] cluster</name>
        <dbReference type="ChEBI" id="CHEBI:190135"/>
    </cofactor>
</comment>
<comment type="cofactor">
    <cofactor evidence="1">
        <name>[4Fe-4S] cluster</name>
        <dbReference type="ChEBI" id="CHEBI:49883"/>
    </cofactor>
</comment>
<comment type="subunit">
    <text evidence="2">Monomer.</text>
</comment>
<comment type="subcellular location">
    <subcellularLocation>
        <location evidence="1">Cytoplasm</location>
    </subcellularLocation>
    <subcellularLocation>
        <location evidence="1">Mitochondrion intermembrane space</location>
    </subcellularLocation>
</comment>
<comment type="domain">
    <text evidence="1">The C-terminal domain binds 2 Fe-S clusters but is otherwise mostly in an intrinsically disordered conformation.</text>
</comment>
<comment type="domain">
    <text evidence="1">The N-terminal domain has structural similarity with S-adenosyl-L-methionine-dependent methyltransferases, but does not bind S-adenosyl-L-methionine. It is required for correct assembly of the 2 Fe-S clusters.</text>
</comment>
<comment type="domain">
    <text evidence="1">The twin Cx2C motifs are involved in the recognition by the mitochondrial MIA40-ERV1 disulfide relay system. The formation of 2 disulfide bonds in the Cx2C motifs through dithiol/disulfide exchange reactions effectively traps the protein in the mitochondrial intermembrane space.</text>
</comment>
<comment type="similarity">
    <text evidence="3">Belongs to the anamorsin family.</text>
</comment>